<proteinExistence type="inferred from homology"/>
<feature type="chain" id="PRO_0000375354" description="Protein YcgL">
    <location>
        <begin position="1"/>
        <end position="110"/>
    </location>
</feature>
<feature type="domain" description="YcgL" evidence="1">
    <location>
        <begin position="14"/>
        <end position="98"/>
    </location>
</feature>
<feature type="region of interest" description="Disordered" evidence="2">
    <location>
        <begin position="87"/>
        <end position="110"/>
    </location>
</feature>
<feature type="compositionally biased region" description="Polar residues" evidence="2">
    <location>
        <begin position="97"/>
        <end position="110"/>
    </location>
</feature>
<reference key="1">
    <citation type="journal article" date="2011" name="J. Bacteriol.">
        <title>Comparative genomics of 28 Salmonella enterica isolates: evidence for CRISPR-mediated adaptive sublineage evolution.</title>
        <authorList>
            <person name="Fricke W.F."/>
            <person name="Mammel M.K."/>
            <person name="McDermott P.F."/>
            <person name="Tartera C."/>
            <person name="White D.G."/>
            <person name="Leclerc J.E."/>
            <person name="Ravel J."/>
            <person name="Cebula T.A."/>
        </authorList>
    </citation>
    <scope>NUCLEOTIDE SEQUENCE [LARGE SCALE GENOMIC DNA]</scope>
    <source>
        <strain>SL476</strain>
    </source>
</reference>
<evidence type="ECO:0000255" key="1">
    <source>
        <dbReference type="HAMAP-Rule" id="MF_01866"/>
    </source>
</evidence>
<evidence type="ECO:0000256" key="2">
    <source>
        <dbReference type="SAM" id="MobiDB-lite"/>
    </source>
</evidence>
<evidence type="ECO:0000305" key="3"/>
<protein>
    <recommendedName>
        <fullName evidence="1">Protein YcgL</fullName>
    </recommendedName>
</protein>
<gene>
    <name evidence="1" type="primary">ycgL</name>
    <name type="ordered locus">SeHA_C2012</name>
</gene>
<name>YCGL_SALHS</name>
<sequence>MRQVTIPLIQSKSMFCVIYRSSKRDQTYLYVEKKDDFSRVPEALMKGFGQPQLAMMLPLDGRKKLVNAELEKVKQALSEQGYYLQLPPPPEDLLKQHLSSVGQNTSPADR</sequence>
<organism>
    <name type="scientific">Salmonella heidelberg (strain SL476)</name>
    <dbReference type="NCBI Taxonomy" id="454169"/>
    <lineage>
        <taxon>Bacteria</taxon>
        <taxon>Pseudomonadati</taxon>
        <taxon>Pseudomonadota</taxon>
        <taxon>Gammaproteobacteria</taxon>
        <taxon>Enterobacterales</taxon>
        <taxon>Enterobacteriaceae</taxon>
        <taxon>Salmonella</taxon>
    </lineage>
</organism>
<comment type="sequence caution" evidence="3">
    <conflict type="erroneous initiation">
        <sequence resource="EMBL-CDS" id="ACF69586"/>
    </conflict>
</comment>
<accession>B4TKE4</accession>
<dbReference type="EMBL" id="CP001120">
    <property type="protein sequence ID" value="ACF69586.1"/>
    <property type="status" value="ALT_INIT"/>
    <property type="molecule type" value="Genomic_DNA"/>
</dbReference>
<dbReference type="SMR" id="B4TKE4"/>
<dbReference type="KEGG" id="seh:SeHA_C2012"/>
<dbReference type="HOGENOM" id="CLU_1873951_0_0_6"/>
<dbReference type="Proteomes" id="UP000001866">
    <property type="component" value="Chromosome"/>
</dbReference>
<dbReference type="Gene3D" id="3.10.510.20">
    <property type="entry name" value="YcgL domain"/>
    <property type="match status" value="1"/>
</dbReference>
<dbReference type="HAMAP" id="MF_01866">
    <property type="entry name" value="UPF0745"/>
    <property type="match status" value="1"/>
</dbReference>
<dbReference type="InterPro" id="IPR038068">
    <property type="entry name" value="YcgL-like_sf"/>
</dbReference>
<dbReference type="InterPro" id="IPR027354">
    <property type="entry name" value="YcgL_dom"/>
</dbReference>
<dbReference type="PANTHER" id="PTHR38109">
    <property type="entry name" value="PROTEIN YCGL"/>
    <property type="match status" value="1"/>
</dbReference>
<dbReference type="PANTHER" id="PTHR38109:SF1">
    <property type="entry name" value="PROTEIN YCGL"/>
    <property type="match status" value="1"/>
</dbReference>
<dbReference type="Pfam" id="PF05166">
    <property type="entry name" value="YcgL"/>
    <property type="match status" value="1"/>
</dbReference>
<dbReference type="SUPFAM" id="SSF160191">
    <property type="entry name" value="YcgL-like"/>
    <property type="match status" value="1"/>
</dbReference>
<dbReference type="PROSITE" id="PS51648">
    <property type="entry name" value="YCGL"/>
    <property type="match status" value="1"/>
</dbReference>